<name>IRS4_ASPFU</name>
<sequence>MDDKSRGTTNAKHLATDTDHPPDDGSAGLPEPGSVKSKTGLFTARSTQKALDGERDEFATFRTRPPQQAAIAMQKPPVPVNKPVTLGRPNSTPELRQTESQGSDDRAEPGYPMSKPVRNMTAGADTVENLLQDNRELPVRNPPIPHRNPAMHPDTSPRPPDIASVSGTKPRPTPPPPRKGGAKPVPKSPSRNEPKIHGEKQSYIPLSNSDVDLTGADEARPTLPPRPDPSRVTHIPPSDHRILLEAHEHSKRHLTPSSPLLDRSLQNNGSSPDLIDYSPGLDEEAMSDAIVASSLASRKAFSAKKVPPPPPPQRQLRTHPLLRPNTPSSDSPRSSSPAPSLRHTLRPATKVGEEELDHHKHRKHIIRRHPHKHHEGDRKRWQSEVTEKERKRYEGVWAANKGLLIPISNSKERSSLEEVSCEGYPPSASEMVLNIAVREIWARSRLPSSILEKIWNLVDRQKIGLLTREEFVVGMWLIDQQLKGHKLPVEVPGSVWDSVRGVPGIRIPKVPSR</sequence>
<evidence type="ECO:0000250" key="1"/>
<evidence type="ECO:0000255" key="2">
    <source>
        <dbReference type="PROSITE-ProRule" id="PRU00077"/>
    </source>
</evidence>
<evidence type="ECO:0000256" key="3">
    <source>
        <dbReference type="SAM" id="MobiDB-lite"/>
    </source>
</evidence>
<evidence type="ECO:0000305" key="4"/>
<reference key="1">
    <citation type="journal article" date="2005" name="Nature">
        <title>Genomic sequence of the pathogenic and allergenic filamentous fungus Aspergillus fumigatus.</title>
        <authorList>
            <person name="Nierman W.C."/>
            <person name="Pain A."/>
            <person name="Anderson M.J."/>
            <person name="Wortman J.R."/>
            <person name="Kim H.S."/>
            <person name="Arroyo J."/>
            <person name="Berriman M."/>
            <person name="Abe K."/>
            <person name="Archer D.B."/>
            <person name="Bermejo C."/>
            <person name="Bennett J.W."/>
            <person name="Bowyer P."/>
            <person name="Chen D."/>
            <person name="Collins M."/>
            <person name="Coulsen R."/>
            <person name="Davies R."/>
            <person name="Dyer P.S."/>
            <person name="Farman M.L."/>
            <person name="Fedorova N."/>
            <person name="Fedorova N.D."/>
            <person name="Feldblyum T.V."/>
            <person name="Fischer R."/>
            <person name="Fosker N."/>
            <person name="Fraser A."/>
            <person name="Garcia J.L."/>
            <person name="Garcia M.J."/>
            <person name="Goble A."/>
            <person name="Goldman G.H."/>
            <person name="Gomi K."/>
            <person name="Griffith-Jones S."/>
            <person name="Gwilliam R."/>
            <person name="Haas B.J."/>
            <person name="Haas H."/>
            <person name="Harris D.E."/>
            <person name="Horiuchi H."/>
            <person name="Huang J."/>
            <person name="Humphray S."/>
            <person name="Jimenez J."/>
            <person name="Keller N."/>
            <person name="Khouri H."/>
            <person name="Kitamoto K."/>
            <person name="Kobayashi T."/>
            <person name="Konzack S."/>
            <person name="Kulkarni R."/>
            <person name="Kumagai T."/>
            <person name="Lafton A."/>
            <person name="Latge J.-P."/>
            <person name="Li W."/>
            <person name="Lord A."/>
            <person name="Lu C."/>
            <person name="Majoros W.H."/>
            <person name="May G.S."/>
            <person name="Miller B.L."/>
            <person name="Mohamoud Y."/>
            <person name="Molina M."/>
            <person name="Monod M."/>
            <person name="Mouyna I."/>
            <person name="Mulligan S."/>
            <person name="Murphy L.D."/>
            <person name="O'Neil S."/>
            <person name="Paulsen I."/>
            <person name="Penalva M.A."/>
            <person name="Pertea M."/>
            <person name="Price C."/>
            <person name="Pritchard B.L."/>
            <person name="Quail M.A."/>
            <person name="Rabbinowitsch E."/>
            <person name="Rawlins N."/>
            <person name="Rajandream M.A."/>
            <person name="Reichard U."/>
            <person name="Renauld H."/>
            <person name="Robson G.D."/>
            <person name="Rodriguez de Cordoba S."/>
            <person name="Rodriguez-Pena J.M."/>
            <person name="Ronning C.M."/>
            <person name="Rutter S."/>
            <person name="Salzberg S.L."/>
            <person name="Sanchez M."/>
            <person name="Sanchez-Ferrero J.C."/>
            <person name="Saunders D."/>
            <person name="Seeger K."/>
            <person name="Squares R."/>
            <person name="Squares S."/>
            <person name="Takeuchi M."/>
            <person name="Tekaia F."/>
            <person name="Turner G."/>
            <person name="Vazquez de Aldana C.R."/>
            <person name="Weidman J."/>
            <person name="White O."/>
            <person name="Woodward J.R."/>
            <person name="Yu J.-H."/>
            <person name="Fraser C.M."/>
            <person name="Galagan J.E."/>
            <person name="Asai K."/>
            <person name="Machida M."/>
            <person name="Hall N."/>
            <person name="Barrell B.G."/>
            <person name="Denning D.W."/>
        </authorList>
    </citation>
    <scope>NUCLEOTIDE SEQUENCE [LARGE SCALE GENOMIC DNA]</scope>
    <source>
        <strain>ATCC MYA-4609 / CBS 101355 / FGSC A1100 / Af293</strain>
    </source>
</reference>
<accession>Q4WVH0</accession>
<gene>
    <name type="primary">irs4</name>
    <name type="ORF">AFUA_5G12070</name>
</gene>
<feature type="chain" id="PRO_0000308749" description="Increased rDNA silencing protein 4">
    <location>
        <begin position="1"/>
        <end position="513"/>
    </location>
</feature>
<feature type="domain" description="EH" evidence="2">
    <location>
        <begin position="412"/>
        <end position="502"/>
    </location>
</feature>
<feature type="region of interest" description="Disordered" evidence="3">
    <location>
        <begin position="1"/>
        <end position="280"/>
    </location>
</feature>
<feature type="region of interest" description="Disordered" evidence="3">
    <location>
        <begin position="301"/>
        <end position="360"/>
    </location>
</feature>
<feature type="compositionally biased region" description="Basic and acidic residues" evidence="3">
    <location>
        <begin position="14"/>
        <end position="23"/>
    </location>
</feature>
<feature type="compositionally biased region" description="Polar residues" evidence="3">
    <location>
        <begin position="88"/>
        <end position="101"/>
    </location>
</feature>
<feature type="compositionally biased region" description="Basic and acidic residues" evidence="3">
    <location>
        <begin position="190"/>
        <end position="200"/>
    </location>
</feature>
<feature type="compositionally biased region" description="Basic and acidic residues" evidence="3">
    <location>
        <begin position="237"/>
        <end position="248"/>
    </location>
</feature>
<feature type="compositionally biased region" description="Low complexity" evidence="3">
    <location>
        <begin position="314"/>
        <end position="340"/>
    </location>
</feature>
<keyword id="KW-0443">Lipid metabolism</keyword>
<keyword id="KW-1185">Reference proteome</keyword>
<organism>
    <name type="scientific">Aspergillus fumigatus (strain ATCC MYA-4609 / CBS 101355 / FGSC A1100 / Af293)</name>
    <name type="common">Neosartorya fumigata</name>
    <dbReference type="NCBI Taxonomy" id="330879"/>
    <lineage>
        <taxon>Eukaryota</taxon>
        <taxon>Fungi</taxon>
        <taxon>Dikarya</taxon>
        <taxon>Ascomycota</taxon>
        <taxon>Pezizomycotina</taxon>
        <taxon>Eurotiomycetes</taxon>
        <taxon>Eurotiomycetidae</taxon>
        <taxon>Eurotiales</taxon>
        <taxon>Aspergillaceae</taxon>
        <taxon>Aspergillus</taxon>
        <taxon>Aspergillus subgen. Fumigati</taxon>
    </lineage>
</organism>
<protein>
    <recommendedName>
        <fullName>Increased rDNA silencing protein 4</fullName>
    </recommendedName>
</protein>
<proteinExistence type="inferred from homology"/>
<comment type="function">
    <text evidence="1">Positive regulator of phosphatidylinositol 4,5-bisphosphate turnover and negatively regulates signaling through the cell integrity pathway. Involved in rDNA silencing (By similarity).</text>
</comment>
<comment type="similarity">
    <text evidence="4">Belongs to the IRS4 family.</text>
</comment>
<dbReference type="EMBL" id="AAHF01000003">
    <property type="protein sequence ID" value="EAL91406.1"/>
    <property type="molecule type" value="Genomic_DNA"/>
</dbReference>
<dbReference type="RefSeq" id="XP_753444.1">
    <property type="nucleotide sequence ID" value="XM_748351.1"/>
</dbReference>
<dbReference type="SMR" id="Q4WVH0"/>
<dbReference type="STRING" id="330879.Q4WVH0"/>
<dbReference type="EnsemblFungi" id="EAL91406">
    <property type="protein sequence ID" value="EAL91406"/>
    <property type="gene ID" value="AFUA_5G12070"/>
</dbReference>
<dbReference type="GeneID" id="3511615"/>
<dbReference type="KEGG" id="afm:AFUA_5G12070"/>
<dbReference type="VEuPathDB" id="FungiDB:Afu5g12070"/>
<dbReference type="eggNOG" id="KOG0998">
    <property type="taxonomic scope" value="Eukaryota"/>
</dbReference>
<dbReference type="HOGENOM" id="CLU_014603_1_0_1"/>
<dbReference type="InParanoid" id="Q4WVH0"/>
<dbReference type="OMA" id="TVDHTYP"/>
<dbReference type="OrthoDB" id="10045710at2759"/>
<dbReference type="Proteomes" id="UP000002530">
    <property type="component" value="Chromosome 5"/>
</dbReference>
<dbReference type="GO" id="GO:0006629">
    <property type="term" value="P:lipid metabolic process"/>
    <property type="evidence" value="ECO:0007669"/>
    <property type="project" value="UniProtKB-KW"/>
</dbReference>
<dbReference type="CDD" id="cd00052">
    <property type="entry name" value="EH"/>
    <property type="match status" value="1"/>
</dbReference>
<dbReference type="Gene3D" id="1.10.238.10">
    <property type="entry name" value="EF-hand"/>
    <property type="match status" value="1"/>
</dbReference>
<dbReference type="InterPro" id="IPR011992">
    <property type="entry name" value="EF-hand-dom_pair"/>
</dbReference>
<dbReference type="InterPro" id="IPR000261">
    <property type="entry name" value="EH_dom"/>
</dbReference>
<dbReference type="Pfam" id="PF12763">
    <property type="entry name" value="EH"/>
    <property type="match status" value="1"/>
</dbReference>
<dbReference type="SMART" id="SM00027">
    <property type="entry name" value="EH"/>
    <property type="match status" value="1"/>
</dbReference>
<dbReference type="SUPFAM" id="SSF47473">
    <property type="entry name" value="EF-hand"/>
    <property type="match status" value="1"/>
</dbReference>
<dbReference type="PROSITE" id="PS50031">
    <property type="entry name" value="EH"/>
    <property type="match status" value="1"/>
</dbReference>